<accession>B7V4G7</accession>
<dbReference type="EC" id="2.3.1.275" evidence="1"/>
<dbReference type="EMBL" id="FM209186">
    <property type="protein sequence ID" value="CAW25305.1"/>
    <property type="molecule type" value="Genomic_DNA"/>
</dbReference>
<dbReference type="RefSeq" id="WP_003085061.1">
    <property type="nucleotide sequence ID" value="NC_011770.1"/>
</dbReference>
<dbReference type="SMR" id="B7V4G7"/>
<dbReference type="KEGG" id="pag:PLES_05781"/>
<dbReference type="HOGENOM" id="CLU_081254_0_0_6"/>
<dbReference type="UniPathway" id="UPA00085"/>
<dbReference type="GO" id="GO:0005886">
    <property type="term" value="C:plasma membrane"/>
    <property type="evidence" value="ECO:0007669"/>
    <property type="project" value="UniProtKB-SubCell"/>
</dbReference>
<dbReference type="GO" id="GO:0043772">
    <property type="term" value="F:acyl-phosphate glycerol-3-phosphate acyltransferase activity"/>
    <property type="evidence" value="ECO:0007669"/>
    <property type="project" value="UniProtKB-UniRule"/>
</dbReference>
<dbReference type="GO" id="GO:0008654">
    <property type="term" value="P:phospholipid biosynthetic process"/>
    <property type="evidence" value="ECO:0007669"/>
    <property type="project" value="UniProtKB-UniRule"/>
</dbReference>
<dbReference type="HAMAP" id="MF_01043">
    <property type="entry name" value="PlsY"/>
    <property type="match status" value="1"/>
</dbReference>
<dbReference type="InterPro" id="IPR003811">
    <property type="entry name" value="G3P_acylTferase_PlsY"/>
</dbReference>
<dbReference type="NCBIfam" id="TIGR00023">
    <property type="entry name" value="glycerol-3-phosphate 1-O-acyltransferase PlsY"/>
    <property type="match status" value="1"/>
</dbReference>
<dbReference type="PANTHER" id="PTHR30309:SF0">
    <property type="entry name" value="GLYCEROL-3-PHOSPHATE ACYLTRANSFERASE-RELATED"/>
    <property type="match status" value="1"/>
</dbReference>
<dbReference type="PANTHER" id="PTHR30309">
    <property type="entry name" value="INNER MEMBRANE PROTEIN YGIH"/>
    <property type="match status" value="1"/>
</dbReference>
<dbReference type="Pfam" id="PF02660">
    <property type="entry name" value="G3P_acyltransf"/>
    <property type="match status" value="1"/>
</dbReference>
<dbReference type="SMART" id="SM01207">
    <property type="entry name" value="G3P_acyltransf"/>
    <property type="match status" value="1"/>
</dbReference>
<gene>
    <name evidence="1" type="primary">plsY</name>
    <name type="ordered locus">PLES_05781</name>
</gene>
<organism>
    <name type="scientific">Pseudomonas aeruginosa (strain LESB58)</name>
    <dbReference type="NCBI Taxonomy" id="557722"/>
    <lineage>
        <taxon>Bacteria</taxon>
        <taxon>Pseudomonadati</taxon>
        <taxon>Pseudomonadota</taxon>
        <taxon>Gammaproteobacteria</taxon>
        <taxon>Pseudomonadales</taxon>
        <taxon>Pseudomonadaceae</taxon>
        <taxon>Pseudomonas</taxon>
    </lineage>
</organism>
<sequence>MVWLLAILAYLLGSLSFAVLLSRWFGTQDPRASGSGNPGATNMLRVAGKKLAILTLLGDVGKGLLPVLVARWLGLGVMEEAWVGIAAVIGHLYPLYFNFRGGKGVATAAGMLLGLYPPAVLLAAAAWLLTFKLSRTSSLASLVATPLTLPLLAWQQPGALLPMTVLTGLIVWRHRANLRDLFAGRERHF</sequence>
<reference key="1">
    <citation type="journal article" date="2009" name="Genome Res.">
        <title>Newly introduced genomic prophage islands are critical determinants of in vivo competitiveness in the Liverpool epidemic strain of Pseudomonas aeruginosa.</title>
        <authorList>
            <person name="Winstanley C."/>
            <person name="Langille M.G.I."/>
            <person name="Fothergill J.L."/>
            <person name="Kukavica-Ibrulj I."/>
            <person name="Paradis-Bleau C."/>
            <person name="Sanschagrin F."/>
            <person name="Thomson N.R."/>
            <person name="Winsor G.L."/>
            <person name="Quail M.A."/>
            <person name="Lennard N."/>
            <person name="Bignell A."/>
            <person name="Clarke L."/>
            <person name="Seeger K."/>
            <person name="Saunders D."/>
            <person name="Harris D."/>
            <person name="Parkhill J."/>
            <person name="Hancock R.E.W."/>
            <person name="Brinkman F.S.L."/>
            <person name="Levesque R.C."/>
        </authorList>
    </citation>
    <scope>NUCLEOTIDE SEQUENCE [LARGE SCALE GENOMIC DNA]</scope>
    <source>
        <strain>LESB58</strain>
    </source>
</reference>
<protein>
    <recommendedName>
        <fullName evidence="1">Glycerol-3-phosphate acyltransferase</fullName>
    </recommendedName>
    <alternativeName>
        <fullName evidence="1">Acyl-PO4 G3P acyltransferase</fullName>
    </alternativeName>
    <alternativeName>
        <fullName evidence="1">Acyl-phosphate--glycerol-3-phosphate acyltransferase</fullName>
    </alternativeName>
    <alternativeName>
        <fullName evidence="1">G3P acyltransferase</fullName>
        <shortName evidence="1">GPAT</shortName>
        <ecNumber evidence="1">2.3.1.275</ecNumber>
    </alternativeName>
    <alternativeName>
        <fullName evidence="1">Lysophosphatidic acid synthase</fullName>
        <shortName evidence="1">LPA synthase</shortName>
    </alternativeName>
</protein>
<feature type="chain" id="PRO_1000136109" description="Glycerol-3-phosphate acyltransferase">
    <location>
        <begin position="1"/>
        <end position="189"/>
    </location>
</feature>
<feature type="transmembrane region" description="Helical" evidence="1">
    <location>
        <begin position="1"/>
        <end position="21"/>
    </location>
</feature>
<feature type="transmembrane region" description="Helical" evidence="1">
    <location>
        <begin position="50"/>
        <end position="70"/>
    </location>
</feature>
<feature type="transmembrane region" description="Helical" evidence="1">
    <location>
        <begin position="72"/>
        <end position="92"/>
    </location>
</feature>
<feature type="transmembrane region" description="Helical" evidence="1">
    <location>
        <begin position="111"/>
        <end position="131"/>
    </location>
</feature>
<feature type="transmembrane region" description="Helical" evidence="1">
    <location>
        <begin position="151"/>
        <end position="171"/>
    </location>
</feature>
<name>PLSY_PSEA8</name>
<comment type="function">
    <text evidence="1">Catalyzes the transfer of an acyl group from acyl-phosphate (acyl-PO(4)) to glycerol-3-phosphate (G3P) to form lysophosphatidic acid (LPA). This enzyme utilizes acyl-phosphate as fatty acyl donor, but not acyl-CoA or acyl-ACP.</text>
</comment>
<comment type="catalytic activity">
    <reaction evidence="1">
        <text>an acyl phosphate + sn-glycerol 3-phosphate = a 1-acyl-sn-glycero-3-phosphate + phosphate</text>
        <dbReference type="Rhea" id="RHEA:34075"/>
        <dbReference type="ChEBI" id="CHEBI:43474"/>
        <dbReference type="ChEBI" id="CHEBI:57597"/>
        <dbReference type="ChEBI" id="CHEBI:57970"/>
        <dbReference type="ChEBI" id="CHEBI:59918"/>
        <dbReference type="EC" id="2.3.1.275"/>
    </reaction>
</comment>
<comment type="pathway">
    <text evidence="1">Lipid metabolism; phospholipid metabolism.</text>
</comment>
<comment type="subunit">
    <text evidence="1">Probably interacts with PlsX.</text>
</comment>
<comment type="subcellular location">
    <subcellularLocation>
        <location evidence="1">Cell inner membrane</location>
        <topology evidence="1">Multi-pass membrane protein</topology>
    </subcellularLocation>
</comment>
<comment type="similarity">
    <text evidence="1">Belongs to the PlsY family.</text>
</comment>
<evidence type="ECO:0000255" key="1">
    <source>
        <dbReference type="HAMAP-Rule" id="MF_01043"/>
    </source>
</evidence>
<proteinExistence type="inferred from homology"/>
<keyword id="KW-0997">Cell inner membrane</keyword>
<keyword id="KW-1003">Cell membrane</keyword>
<keyword id="KW-0444">Lipid biosynthesis</keyword>
<keyword id="KW-0443">Lipid metabolism</keyword>
<keyword id="KW-0472">Membrane</keyword>
<keyword id="KW-0594">Phospholipid biosynthesis</keyword>
<keyword id="KW-1208">Phospholipid metabolism</keyword>
<keyword id="KW-0808">Transferase</keyword>
<keyword id="KW-0812">Transmembrane</keyword>
<keyword id="KW-1133">Transmembrane helix</keyword>